<name>THIK_SALDC</name>
<proteinExistence type="inferred from homology"/>
<organism>
    <name type="scientific">Salmonella dublin (strain CT_02021853)</name>
    <dbReference type="NCBI Taxonomy" id="439851"/>
    <lineage>
        <taxon>Bacteria</taxon>
        <taxon>Pseudomonadati</taxon>
        <taxon>Pseudomonadota</taxon>
        <taxon>Gammaproteobacteria</taxon>
        <taxon>Enterobacterales</taxon>
        <taxon>Enterobacteriaceae</taxon>
        <taxon>Salmonella</taxon>
    </lineage>
</organism>
<keyword id="KW-0067">ATP-binding</keyword>
<keyword id="KW-0418">Kinase</keyword>
<keyword id="KW-0547">Nucleotide-binding</keyword>
<keyword id="KW-0808">Transferase</keyword>
<gene>
    <name evidence="1" type="primary">thiK</name>
    <name type="ordered locus">SeD_A2161</name>
</gene>
<sequence>MRSNNNNPLTRDEILSRYFPQYRPAVAASQGLSGGSCIIAHDTHRIVLRRHHDPDAPPAHFLRHYRALSQLPASLAPRALFYTPGWMAVEYLHGVVNSALPDADELAALLYHLHQQPRFGWRIALSPLLAQYWSCCDPARRTPFWLRRLKQLQKNGEPRPLRLAPLHMDVHGDNIVLTSAGLRLIDWEYAGDGDIALELAAVWVEDERQHRQLADAYAARARIDARQLWRQIRLWHPWVIMLKAGWFEYRWRQTGEQQFIRLADETWRQLRMKG</sequence>
<protein>
    <recommendedName>
        <fullName evidence="1">Thiamine kinase</fullName>
        <ecNumber evidence="1">2.7.1.89</ecNumber>
    </recommendedName>
</protein>
<feature type="chain" id="PRO_1000198095" description="Thiamine kinase">
    <location>
        <begin position="1"/>
        <end position="274"/>
    </location>
</feature>
<dbReference type="EC" id="2.7.1.89" evidence="1"/>
<dbReference type="EMBL" id="CP001144">
    <property type="protein sequence ID" value="ACH75275.1"/>
    <property type="molecule type" value="Genomic_DNA"/>
</dbReference>
<dbReference type="RefSeq" id="WP_001257327.1">
    <property type="nucleotide sequence ID" value="NC_011205.1"/>
</dbReference>
<dbReference type="SMR" id="B5FK99"/>
<dbReference type="KEGG" id="sed:SeD_A2161"/>
<dbReference type="HOGENOM" id="CLU_055115_2_1_6"/>
<dbReference type="UniPathway" id="UPA00060">
    <property type="reaction ID" value="UER00596"/>
</dbReference>
<dbReference type="Proteomes" id="UP000008322">
    <property type="component" value="Chromosome"/>
</dbReference>
<dbReference type="GO" id="GO:0005524">
    <property type="term" value="F:ATP binding"/>
    <property type="evidence" value="ECO:0007669"/>
    <property type="project" value="UniProtKB-KW"/>
</dbReference>
<dbReference type="GO" id="GO:0019165">
    <property type="term" value="F:thiamine kinase activity"/>
    <property type="evidence" value="ECO:0007669"/>
    <property type="project" value="UniProtKB-UniRule"/>
</dbReference>
<dbReference type="GO" id="GO:0009229">
    <property type="term" value="P:thiamine diphosphate biosynthetic process"/>
    <property type="evidence" value="ECO:0007669"/>
    <property type="project" value="UniProtKB-UniRule"/>
</dbReference>
<dbReference type="GO" id="GO:0006772">
    <property type="term" value="P:thiamine metabolic process"/>
    <property type="evidence" value="ECO:0007669"/>
    <property type="project" value="InterPro"/>
</dbReference>
<dbReference type="Gene3D" id="3.90.1200.10">
    <property type="match status" value="1"/>
</dbReference>
<dbReference type="HAMAP" id="MF_01604">
    <property type="entry name" value="Thiamine_kinase"/>
    <property type="match status" value="1"/>
</dbReference>
<dbReference type="InterPro" id="IPR002575">
    <property type="entry name" value="Aminoglycoside_PTrfase"/>
</dbReference>
<dbReference type="InterPro" id="IPR011009">
    <property type="entry name" value="Kinase-like_dom_sf"/>
</dbReference>
<dbReference type="InterPro" id="IPR014093">
    <property type="entry name" value="Thiamine_kinase"/>
</dbReference>
<dbReference type="NCBIfam" id="NF007620">
    <property type="entry name" value="PRK10271.1"/>
    <property type="match status" value="1"/>
</dbReference>
<dbReference type="NCBIfam" id="TIGR02721">
    <property type="entry name" value="ycfN_thiK"/>
    <property type="match status" value="1"/>
</dbReference>
<dbReference type="Pfam" id="PF01636">
    <property type="entry name" value="APH"/>
    <property type="match status" value="1"/>
</dbReference>
<dbReference type="SUPFAM" id="SSF56112">
    <property type="entry name" value="Protein kinase-like (PK-like)"/>
    <property type="match status" value="1"/>
</dbReference>
<accession>B5FK99</accession>
<reference key="1">
    <citation type="journal article" date="2011" name="J. Bacteriol.">
        <title>Comparative genomics of 28 Salmonella enterica isolates: evidence for CRISPR-mediated adaptive sublineage evolution.</title>
        <authorList>
            <person name="Fricke W.F."/>
            <person name="Mammel M.K."/>
            <person name="McDermott P.F."/>
            <person name="Tartera C."/>
            <person name="White D.G."/>
            <person name="Leclerc J.E."/>
            <person name="Ravel J."/>
            <person name="Cebula T.A."/>
        </authorList>
    </citation>
    <scope>NUCLEOTIDE SEQUENCE [LARGE SCALE GENOMIC DNA]</scope>
    <source>
        <strain>CT_02021853</strain>
    </source>
</reference>
<evidence type="ECO:0000255" key="1">
    <source>
        <dbReference type="HAMAP-Rule" id="MF_01604"/>
    </source>
</evidence>
<comment type="function">
    <text evidence="1">Catalyzes the ATP-dependent phosphorylation of thiamine to thiamine phosphate. Is involved in thiamine salvage.</text>
</comment>
<comment type="catalytic activity">
    <reaction evidence="1">
        <text>thiamine + ATP = thiamine phosphate + ADP + H(+)</text>
        <dbReference type="Rhea" id="RHEA:12012"/>
        <dbReference type="ChEBI" id="CHEBI:15378"/>
        <dbReference type="ChEBI" id="CHEBI:18385"/>
        <dbReference type="ChEBI" id="CHEBI:30616"/>
        <dbReference type="ChEBI" id="CHEBI:37575"/>
        <dbReference type="ChEBI" id="CHEBI:456216"/>
        <dbReference type="EC" id="2.7.1.89"/>
    </reaction>
    <physiologicalReaction direction="left-to-right" evidence="1">
        <dbReference type="Rhea" id="RHEA:12013"/>
    </physiologicalReaction>
</comment>
<comment type="pathway">
    <text evidence="1">Cofactor biosynthesis; thiamine diphosphate biosynthesis; thiamine phosphate from thiamine: step 1/1.</text>
</comment>
<comment type="similarity">
    <text evidence="1">Belongs to the thiamine kinase family.</text>
</comment>